<sequence>MKYTTQMDAARKGIITKEMEIVSKKENMDIEILREKMAKGQIVIPANKNHKSLDPEGIGSGLKTKINVNLGISRDCPNVDAELEKVKIAIDMKAEAIMDLSSFGKTEEFRQKLVNMSTAMIGTVPIYDAVGFYDKELKDITEKEFLDVVRKHGEDGVDFVTIHAGLNRDTVKTFKKNTRVTNIVSRGGSLLYAWMELNNKENPFYEYYDELLEICAAYDMTISLGDALRPGSIADGTDASQIAELMVLGELTKRAWEKNVQVIIEGPGHMKLNEIEANVILEKKLCHGAPFYVLGPLVTDIAPGYDHITSAIGGAIAASHGVDFLCYVTPAEHLRLPTLEDMKEGIIASKIAAHAGDLAKGVQGADEWDLKMSKARQKLDWEEMFSLSIDDEKARRYRKESSPEHEDSCTMCGKMCSMRNMNRIMEGKDINILRSED</sequence>
<keyword id="KW-0004">4Fe-4S</keyword>
<keyword id="KW-0408">Iron</keyword>
<keyword id="KW-0411">Iron-sulfur</keyword>
<keyword id="KW-0456">Lyase</keyword>
<keyword id="KW-0479">Metal-binding</keyword>
<keyword id="KW-1185">Reference proteome</keyword>
<keyword id="KW-0949">S-adenosyl-L-methionine</keyword>
<keyword id="KW-0784">Thiamine biosynthesis</keyword>
<keyword id="KW-0862">Zinc</keyword>
<proteinExistence type="inferred from homology"/>
<feature type="chain" id="PRO_1000057586" description="Phosphomethylpyrimidine synthase">
    <location>
        <begin position="1"/>
        <end position="437"/>
    </location>
</feature>
<feature type="binding site" evidence="1">
    <location>
        <position position="69"/>
    </location>
    <ligand>
        <name>substrate</name>
    </ligand>
</feature>
<feature type="binding site" evidence="1">
    <location>
        <position position="98"/>
    </location>
    <ligand>
        <name>substrate</name>
    </ligand>
</feature>
<feature type="binding site" evidence="1">
    <location>
        <position position="127"/>
    </location>
    <ligand>
        <name>substrate</name>
    </ligand>
</feature>
<feature type="binding site" evidence="1">
    <location>
        <position position="163"/>
    </location>
    <ligand>
        <name>substrate</name>
    </ligand>
</feature>
<feature type="binding site" evidence="1">
    <location>
        <begin position="185"/>
        <end position="187"/>
    </location>
    <ligand>
        <name>substrate</name>
    </ligand>
</feature>
<feature type="binding site" evidence="1">
    <location>
        <begin position="226"/>
        <end position="229"/>
    </location>
    <ligand>
        <name>substrate</name>
    </ligand>
</feature>
<feature type="binding site" evidence="1">
    <location>
        <position position="265"/>
    </location>
    <ligand>
        <name>substrate</name>
    </ligand>
</feature>
<feature type="binding site" evidence="1">
    <location>
        <position position="269"/>
    </location>
    <ligand>
        <name>Zn(2+)</name>
        <dbReference type="ChEBI" id="CHEBI:29105"/>
    </ligand>
</feature>
<feature type="binding site" evidence="1">
    <location>
        <position position="292"/>
    </location>
    <ligand>
        <name>substrate</name>
    </ligand>
</feature>
<feature type="binding site" evidence="1">
    <location>
        <position position="333"/>
    </location>
    <ligand>
        <name>Zn(2+)</name>
        <dbReference type="ChEBI" id="CHEBI:29105"/>
    </ligand>
</feature>
<feature type="binding site" evidence="1">
    <location>
        <position position="409"/>
    </location>
    <ligand>
        <name>[4Fe-4S] cluster</name>
        <dbReference type="ChEBI" id="CHEBI:49883"/>
        <note>4Fe-4S-S-AdoMet</note>
    </ligand>
</feature>
<feature type="binding site" evidence="1">
    <location>
        <position position="412"/>
    </location>
    <ligand>
        <name>[4Fe-4S] cluster</name>
        <dbReference type="ChEBI" id="CHEBI:49883"/>
        <note>4Fe-4S-S-AdoMet</note>
    </ligand>
</feature>
<feature type="binding site" evidence="1">
    <location>
        <position position="416"/>
    </location>
    <ligand>
        <name>[4Fe-4S] cluster</name>
        <dbReference type="ChEBI" id="CHEBI:49883"/>
        <note>4Fe-4S-S-AdoMet</note>
    </ligand>
</feature>
<dbReference type="EC" id="4.1.99.17" evidence="1"/>
<dbReference type="EMBL" id="CP000853">
    <property type="protein sequence ID" value="ABW18318.1"/>
    <property type="molecule type" value="Genomic_DNA"/>
</dbReference>
<dbReference type="RefSeq" id="WP_012158630.1">
    <property type="nucleotide sequence ID" value="NC_009922.1"/>
</dbReference>
<dbReference type="SMR" id="A8MEI9"/>
<dbReference type="STRING" id="350688.Clos_0766"/>
<dbReference type="KEGG" id="aoe:Clos_0766"/>
<dbReference type="eggNOG" id="COG0422">
    <property type="taxonomic scope" value="Bacteria"/>
</dbReference>
<dbReference type="HOGENOM" id="CLU_013181_2_2_9"/>
<dbReference type="OrthoDB" id="9805897at2"/>
<dbReference type="UniPathway" id="UPA00060"/>
<dbReference type="Proteomes" id="UP000000269">
    <property type="component" value="Chromosome"/>
</dbReference>
<dbReference type="GO" id="GO:0005829">
    <property type="term" value="C:cytosol"/>
    <property type="evidence" value="ECO:0007669"/>
    <property type="project" value="TreeGrafter"/>
</dbReference>
<dbReference type="GO" id="GO:0051539">
    <property type="term" value="F:4 iron, 4 sulfur cluster binding"/>
    <property type="evidence" value="ECO:0007669"/>
    <property type="project" value="UniProtKB-KW"/>
</dbReference>
<dbReference type="GO" id="GO:0016830">
    <property type="term" value="F:carbon-carbon lyase activity"/>
    <property type="evidence" value="ECO:0007669"/>
    <property type="project" value="InterPro"/>
</dbReference>
<dbReference type="GO" id="GO:0008270">
    <property type="term" value="F:zinc ion binding"/>
    <property type="evidence" value="ECO:0007669"/>
    <property type="project" value="UniProtKB-UniRule"/>
</dbReference>
<dbReference type="GO" id="GO:0009228">
    <property type="term" value="P:thiamine biosynthetic process"/>
    <property type="evidence" value="ECO:0007669"/>
    <property type="project" value="UniProtKB-KW"/>
</dbReference>
<dbReference type="GO" id="GO:0009229">
    <property type="term" value="P:thiamine diphosphate biosynthetic process"/>
    <property type="evidence" value="ECO:0007669"/>
    <property type="project" value="UniProtKB-UniRule"/>
</dbReference>
<dbReference type="FunFam" id="3.20.20.540:FF:000001">
    <property type="entry name" value="Phosphomethylpyrimidine synthase"/>
    <property type="match status" value="1"/>
</dbReference>
<dbReference type="Gene3D" id="6.10.250.620">
    <property type="match status" value="1"/>
</dbReference>
<dbReference type="Gene3D" id="3.20.20.540">
    <property type="entry name" value="Radical SAM ThiC family, central domain"/>
    <property type="match status" value="1"/>
</dbReference>
<dbReference type="HAMAP" id="MF_00089">
    <property type="entry name" value="ThiC"/>
    <property type="match status" value="1"/>
</dbReference>
<dbReference type="InterPro" id="IPR037509">
    <property type="entry name" value="ThiC"/>
</dbReference>
<dbReference type="InterPro" id="IPR038521">
    <property type="entry name" value="ThiC/Bza_core_dom"/>
</dbReference>
<dbReference type="InterPro" id="IPR002817">
    <property type="entry name" value="ThiC/BzaA/B"/>
</dbReference>
<dbReference type="NCBIfam" id="NF009895">
    <property type="entry name" value="PRK13352.1"/>
    <property type="match status" value="1"/>
</dbReference>
<dbReference type="NCBIfam" id="TIGR00190">
    <property type="entry name" value="thiC"/>
    <property type="match status" value="1"/>
</dbReference>
<dbReference type="PANTHER" id="PTHR30557:SF1">
    <property type="entry name" value="PHOSPHOMETHYLPYRIMIDINE SYNTHASE, CHLOROPLASTIC"/>
    <property type="match status" value="1"/>
</dbReference>
<dbReference type="PANTHER" id="PTHR30557">
    <property type="entry name" value="THIAMINE BIOSYNTHESIS PROTEIN THIC"/>
    <property type="match status" value="1"/>
</dbReference>
<dbReference type="Pfam" id="PF01964">
    <property type="entry name" value="ThiC_Rad_SAM"/>
    <property type="match status" value="1"/>
</dbReference>
<dbReference type="SFLD" id="SFLDF00407">
    <property type="entry name" value="phosphomethylpyrimidine_syntha"/>
    <property type="match status" value="1"/>
</dbReference>
<dbReference type="SFLD" id="SFLDG01114">
    <property type="entry name" value="phosphomethylpyrimidine_syntha"/>
    <property type="match status" value="1"/>
</dbReference>
<dbReference type="SFLD" id="SFLDS00113">
    <property type="entry name" value="Radical_SAM_Phosphomethylpyrim"/>
    <property type="match status" value="1"/>
</dbReference>
<organism>
    <name type="scientific">Alkaliphilus oremlandii (strain OhILAs)</name>
    <name type="common">Clostridium oremlandii (strain OhILAs)</name>
    <dbReference type="NCBI Taxonomy" id="350688"/>
    <lineage>
        <taxon>Bacteria</taxon>
        <taxon>Bacillati</taxon>
        <taxon>Bacillota</taxon>
        <taxon>Clostridia</taxon>
        <taxon>Peptostreptococcales</taxon>
        <taxon>Natronincolaceae</taxon>
        <taxon>Alkaliphilus</taxon>
    </lineage>
</organism>
<accession>A8MEI9</accession>
<protein>
    <recommendedName>
        <fullName evidence="1">Phosphomethylpyrimidine synthase</fullName>
        <ecNumber evidence="1">4.1.99.17</ecNumber>
    </recommendedName>
    <alternativeName>
        <fullName evidence="1">Hydroxymethylpyrimidine phosphate synthase</fullName>
        <shortName evidence="1">HMP-P synthase</shortName>
        <shortName evidence="1">HMP-phosphate synthase</shortName>
        <shortName evidence="1">HMPP synthase</shortName>
    </alternativeName>
    <alternativeName>
        <fullName evidence="1">Thiamine biosynthesis protein ThiC</fullName>
    </alternativeName>
</protein>
<evidence type="ECO:0000255" key="1">
    <source>
        <dbReference type="HAMAP-Rule" id="MF_00089"/>
    </source>
</evidence>
<comment type="function">
    <text evidence="1">Catalyzes the synthesis of the hydroxymethylpyrimidine phosphate (HMP-P) moiety of thiamine from aminoimidazole ribotide (AIR) in a radical S-adenosyl-L-methionine (SAM)-dependent reaction.</text>
</comment>
<comment type="catalytic activity">
    <reaction evidence="1">
        <text>5-amino-1-(5-phospho-beta-D-ribosyl)imidazole + S-adenosyl-L-methionine = 4-amino-2-methyl-5-(phosphooxymethyl)pyrimidine + CO + 5'-deoxyadenosine + formate + L-methionine + 3 H(+)</text>
        <dbReference type="Rhea" id="RHEA:24840"/>
        <dbReference type="ChEBI" id="CHEBI:15378"/>
        <dbReference type="ChEBI" id="CHEBI:15740"/>
        <dbReference type="ChEBI" id="CHEBI:17245"/>
        <dbReference type="ChEBI" id="CHEBI:17319"/>
        <dbReference type="ChEBI" id="CHEBI:57844"/>
        <dbReference type="ChEBI" id="CHEBI:58354"/>
        <dbReference type="ChEBI" id="CHEBI:59789"/>
        <dbReference type="ChEBI" id="CHEBI:137981"/>
        <dbReference type="EC" id="4.1.99.17"/>
    </reaction>
</comment>
<comment type="cofactor">
    <cofactor evidence="1">
        <name>[4Fe-4S] cluster</name>
        <dbReference type="ChEBI" id="CHEBI:49883"/>
    </cofactor>
    <text evidence="1">Binds 1 [4Fe-4S] cluster per subunit. The cluster is coordinated with 3 cysteines and an exchangeable S-adenosyl-L-methionine.</text>
</comment>
<comment type="pathway">
    <text evidence="1">Cofactor biosynthesis; thiamine diphosphate biosynthesis.</text>
</comment>
<comment type="similarity">
    <text evidence="1">Belongs to the ThiC family.</text>
</comment>
<reference key="1">
    <citation type="submission" date="2007-10" db="EMBL/GenBank/DDBJ databases">
        <title>Complete genome of Alkaliphilus oremlandii OhILAs.</title>
        <authorList>
            <person name="Copeland A."/>
            <person name="Lucas S."/>
            <person name="Lapidus A."/>
            <person name="Barry K."/>
            <person name="Detter J.C."/>
            <person name="Glavina del Rio T."/>
            <person name="Hammon N."/>
            <person name="Israni S."/>
            <person name="Dalin E."/>
            <person name="Tice H."/>
            <person name="Pitluck S."/>
            <person name="Chain P."/>
            <person name="Malfatti S."/>
            <person name="Shin M."/>
            <person name="Vergez L."/>
            <person name="Schmutz J."/>
            <person name="Larimer F."/>
            <person name="Land M."/>
            <person name="Hauser L."/>
            <person name="Kyrpides N."/>
            <person name="Mikhailova N."/>
            <person name="Stolz J.F."/>
            <person name="Dawson A."/>
            <person name="Fisher E."/>
            <person name="Crable B."/>
            <person name="Perera E."/>
            <person name="Lisak J."/>
            <person name="Ranganathan M."/>
            <person name="Basu P."/>
            <person name="Richardson P."/>
        </authorList>
    </citation>
    <scope>NUCLEOTIDE SEQUENCE [LARGE SCALE GENOMIC DNA]</scope>
    <source>
        <strain>OhILAs</strain>
    </source>
</reference>
<gene>
    <name evidence="1" type="primary">thiC</name>
    <name type="ordered locus">Clos_0766</name>
</gene>
<name>THIC_ALKOO</name>